<feature type="signal peptide" evidence="2">
    <location>
        <begin position="1"/>
        <end position="15"/>
    </location>
</feature>
<feature type="chain" id="PRO_0000308773" description="Nuclear fusion protein KAR5">
    <location>
        <begin position="16"/>
        <end position="487"/>
    </location>
</feature>
<feature type="topological domain" description="Lumenal" evidence="1">
    <location>
        <begin position="16"/>
        <end position="450"/>
    </location>
</feature>
<feature type="transmembrane region" description="Helical" evidence="2">
    <location>
        <begin position="451"/>
        <end position="471"/>
    </location>
</feature>
<feature type="topological domain" description="Cytoplasmic" evidence="1">
    <location>
        <begin position="472"/>
        <end position="487"/>
    </location>
</feature>
<feature type="glycosylation site" description="N-linked (GlcNAc...) asparagine" evidence="2">
    <location>
        <position position="156"/>
    </location>
</feature>
<feature type="glycosylation site" description="N-linked (GlcNAc...) asparagine" evidence="2">
    <location>
        <position position="229"/>
    </location>
</feature>
<feature type="glycosylation site" description="N-linked (GlcNAc...) asparagine" evidence="2">
    <location>
        <position position="272"/>
    </location>
</feature>
<feature type="glycosylation site" description="N-linked (GlcNAc...) asparagine" evidence="2">
    <location>
        <position position="379"/>
    </location>
</feature>
<organism>
    <name type="scientific">Kluyveromyces lactis (strain ATCC 8585 / CBS 2359 / DSM 70799 / NBRC 1267 / NRRL Y-1140 / WM37)</name>
    <name type="common">Yeast</name>
    <name type="synonym">Candida sphaerica</name>
    <dbReference type="NCBI Taxonomy" id="284590"/>
    <lineage>
        <taxon>Eukaryota</taxon>
        <taxon>Fungi</taxon>
        <taxon>Dikarya</taxon>
        <taxon>Ascomycota</taxon>
        <taxon>Saccharomycotina</taxon>
        <taxon>Saccharomycetes</taxon>
        <taxon>Saccharomycetales</taxon>
        <taxon>Saccharomycetaceae</taxon>
        <taxon>Kluyveromyces</taxon>
    </lineage>
</organism>
<evidence type="ECO:0000250" key="1"/>
<evidence type="ECO:0000255" key="2"/>
<evidence type="ECO:0000305" key="3"/>
<accession>Q6CIJ3</accession>
<protein>
    <recommendedName>
        <fullName>Nuclear fusion protein KAR5</fullName>
    </recommendedName>
    <alternativeName>
        <fullName>Karyogamy protein 5</fullName>
    </alternativeName>
</protein>
<reference key="1">
    <citation type="journal article" date="2004" name="Nature">
        <title>Genome evolution in yeasts.</title>
        <authorList>
            <person name="Dujon B."/>
            <person name="Sherman D."/>
            <person name="Fischer G."/>
            <person name="Durrens P."/>
            <person name="Casaregola S."/>
            <person name="Lafontaine I."/>
            <person name="de Montigny J."/>
            <person name="Marck C."/>
            <person name="Neuveglise C."/>
            <person name="Talla E."/>
            <person name="Goffard N."/>
            <person name="Frangeul L."/>
            <person name="Aigle M."/>
            <person name="Anthouard V."/>
            <person name="Babour A."/>
            <person name="Barbe V."/>
            <person name="Barnay S."/>
            <person name="Blanchin S."/>
            <person name="Beckerich J.-M."/>
            <person name="Beyne E."/>
            <person name="Bleykasten C."/>
            <person name="Boisrame A."/>
            <person name="Boyer J."/>
            <person name="Cattolico L."/>
            <person name="Confanioleri F."/>
            <person name="de Daruvar A."/>
            <person name="Despons L."/>
            <person name="Fabre E."/>
            <person name="Fairhead C."/>
            <person name="Ferry-Dumazet H."/>
            <person name="Groppi A."/>
            <person name="Hantraye F."/>
            <person name="Hennequin C."/>
            <person name="Jauniaux N."/>
            <person name="Joyet P."/>
            <person name="Kachouri R."/>
            <person name="Kerrest A."/>
            <person name="Koszul R."/>
            <person name="Lemaire M."/>
            <person name="Lesur I."/>
            <person name="Ma L."/>
            <person name="Muller H."/>
            <person name="Nicaud J.-M."/>
            <person name="Nikolski M."/>
            <person name="Oztas S."/>
            <person name="Ozier-Kalogeropoulos O."/>
            <person name="Pellenz S."/>
            <person name="Potier S."/>
            <person name="Richard G.-F."/>
            <person name="Straub M.-L."/>
            <person name="Suleau A."/>
            <person name="Swennen D."/>
            <person name="Tekaia F."/>
            <person name="Wesolowski-Louvel M."/>
            <person name="Westhof E."/>
            <person name="Wirth B."/>
            <person name="Zeniou-Meyer M."/>
            <person name="Zivanovic Y."/>
            <person name="Bolotin-Fukuhara M."/>
            <person name="Thierry A."/>
            <person name="Bouchier C."/>
            <person name="Caudron B."/>
            <person name="Scarpelli C."/>
            <person name="Gaillardin C."/>
            <person name="Weissenbach J."/>
            <person name="Wincker P."/>
            <person name="Souciet J.-L."/>
        </authorList>
    </citation>
    <scope>NUCLEOTIDE SEQUENCE [LARGE SCALE GENOMIC DNA]</scope>
    <source>
        <strain>ATCC 8585 / CBS 2359 / DSM 70799 / NBRC 1267 / NRRL Y-1140 / WM37</strain>
    </source>
</reference>
<dbReference type="EMBL" id="CR382126">
    <property type="protein sequence ID" value="CAG98954.1"/>
    <property type="molecule type" value="Genomic_DNA"/>
</dbReference>
<dbReference type="RefSeq" id="XP_456246.1">
    <property type="nucleotide sequence ID" value="XM_456246.1"/>
</dbReference>
<dbReference type="SMR" id="Q6CIJ3"/>
<dbReference type="FunCoup" id="Q6CIJ3">
    <property type="interactions" value="45"/>
</dbReference>
<dbReference type="GlyCosmos" id="Q6CIJ3">
    <property type="glycosylation" value="4 sites, No reported glycans"/>
</dbReference>
<dbReference type="PaxDb" id="284590-Q6CIJ3"/>
<dbReference type="KEGG" id="kla:KLLA0_F26180g"/>
<dbReference type="eggNOG" id="ENOG502QVCQ">
    <property type="taxonomic scope" value="Eukaryota"/>
</dbReference>
<dbReference type="HOGENOM" id="CLU_042075_0_0_1"/>
<dbReference type="InParanoid" id="Q6CIJ3"/>
<dbReference type="OMA" id="LSICEFQ"/>
<dbReference type="Proteomes" id="UP000000598">
    <property type="component" value="Chromosome F"/>
</dbReference>
<dbReference type="GO" id="GO:0005789">
    <property type="term" value="C:endoplasmic reticulum membrane"/>
    <property type="evidence" value="ECO:0007669"/>
    <property type="project" value="UniProtKB-SubCell"/>
</dbReference>
<dbReference type="GO" id="GO:0031965">
    <property type="term" value="C:nuclear membrane"/>
    <property type="evidence" value="ECO:0007669"/>
    <property type="project" value="UniProtKB-SubCell"/>
</dbReference>
<dbReference type="GO" id="GO:0000742">
    <property type="term" value="P:karyogamy involved in conjugation with cellular fusion"/>
    <property type="evidence" value="ECO:0007669"/>
    <property type="project" value="InterPro"/>
</dbReference>
<dbReference type="GO" id="GO:0048288">
    <property type="term" value="P:nuclear membrane fusion involved in karyogamy"/>
    <property type="evidence" value="ECO:0007669"/>
    <property type="project" value="InterPro"/>
</dbReference>
<dbReference type="InterPro" id="IPR007292">
    <property type="entry name" value="Nuclear_fusion_Kar5"/>
</dbReference>
<dbReference type="PANTHER" id="PTHR28012">
    <property type="entry name" value="NUCLEAR FUSION PROTEIN KAR5"/>
    <property type="match status" value="1"/>
</dbReference>
<dbReference type="PANTHER" id="PTHR28012:SF1">
    <property type="entry name" value="NUCLEAR FUSION PROTEIN KAR5"/>
    <property type="match status" value="1"/>
</dbReference>
<dbReference type="Pfam" id="PF04163">
    <property type="entry name" value="Tht1"/>
    <property type="match status" value="1"/>
</dbReference>
<proteinExistence type="inferred from homology"/>
<comment type="function">
    <text evidence="1">Required for nuclear membrane fusion during karyogamy.</text>
</comment>
<comment type="subcellular location">
    <subcellularLocation>
        <location evidence="1">Endoplasmic reticulum membrane</location>
        <topology evidence="1">Single-pass membrane protein</topology>
    </subcellularLocation>
    <subcellularLocation>
        <location evidence="1">Nucleus membrane</location>
        <topology evidence="1">Single-pass membrane protein</topology>
    </subcellularLocation>
</comment>
<comment type="similarity">
    <text evidence="3">Belongs to the KAR5 family.</text>
</comment>
<gene>
    <name type="primary">KAR5</name>
    <name type="ordered locus">KLLA0F26180g</name>
</gene>
<keyword id="KW-0256">Endoplasmic reticulum</keyword>
<keyword id="KW-0325">Glycoprotein</keyword>
<keyword id="KW-0415">Karyogamy</keyword>
<keyword id="KW-0472">Membrane</keyword>
<keyword id="KW-0539">Nucleus</keyword>
<keyword id="KW-1185">Reference proteome</keyword>
<keyword id="KW-0732">Signal</keyword>
<keyword id="KW-0812">Transmembrane</keyword>
<keyword id="KW-1133">Transmembrane helix</keyword>
<sequence>MWFLVFSIWIASGQLLPHISNVIEKELDQLEITELSREYINNKFPITQSSCVKNALGEFLEICMRKGFEFVDADLRVITAVRLSVCEFESSGLTNYPSECHEKRLGGIDTISCVNALESSPQWWTTYSGNYQNLPHICMENSLPFEKEQILELFLNITDMYSEFQRNIENYWKSFSSDLEINGKENIDMIQNLFNSLVNDLIQNHKMKDEELITEFDKMKAEFDIRFFNFTESFDNLNDEVNEDLSLIKSHLIETFRQVDSEYMAQLQKNKNSTDKAFNELESMSTYILDHQKTSMELIDSFFSDLIDLTRDKNLVISDELMQTQEETIHLIFQYNKLVHESVIPLLTDDLLPVVRGVSNSIVENLDNMNVELTSHLENVSQTIEVKFKALEKETDRSLLKAKEVESNLRNLNNLVSTSLKGLQTIVRLLTFLLKRQVVLVGILQIFLRKYISMNLYLYAIAVVVTALAGSKVGSWGSLLMKSFVTR</sequence>
<name>KAR5_KLULA</name>